<name>TRPA1_HUMAN</name>
<protein>
    <recommendedName>
        <fullName evidence="31">Transient receptor potential cation channel subfamily A member 1</fullName>
    </recommendedName>
    <alternativeName>
        <fullName evidence="31">Ankyrin-like with transmembrane domains protein 1</fullName>
    </alternativeName>
    <alternativeName>
        <fullName evidence="22">Transformation-sensitive protein p120</fullName>
        <shortName evidence="22">p120</shortName>
    </alternativeName>
    <alternativeName>
        <fullName evidence="23 24">Wasabi receptor</fullName>
    </alternativeName>
</protein>
<organism>
    <name type="scientific">Homo sapiens</name>
    <name type="common">Human</name>
    <dbReference type="NCBI Taxonomy" id="9606"/>
    <lineage>
        <taxon>Eukaryota</taxon>
        <taxon>Metazoa</taxon>
        <taxon>Chordata</taxon>
        <taxon>Craniata</taxon>
        <taxon>Vertebrata</taxon>
        <taxon>Euteleostomi</taxon>
        <taxon>Mammalia</taxon>
        <taxon>Eutheria</taxon>
        <taxon>Euarchontoglires</taxon>
        <taxon>Primates</taxon>
        <taxon>Haplorrhini</taxon>
        <taxon>Catarrhini</taxon>
        <taxon>Hominidae</taxon>
        <taxon>Homo</taxon>
    </lineage>
</organism>
<evidence type="ECO:0000250" key="1">
    <source>
        <dbReference type="UniProtKB" id="Q6RI86"/>
    </source>
</evidence>
<evidence type="ECO:0000250" key="2">
    <source>
        <dbReference type="UniProtKB" id="Q8BLA8"/>
    </source>
</evidence>
<evidence type="ECO:0000255" key="3"/>
<evidence type="ECO:0000269" key="4">
    <source>
    </source>
</evidence>
<evidence type="ECO:0000269" key="5">
    <source>
    </source>
</evidence>
<evidence type="ECO:0000269" key="6">
    <source>
    </source>
</evidence>
<evidence type="ECO:0000269" key="7">
    <source>
    </source>
</evidence>
<evidence type="ECO:0000269" key="8">
    <source>
    </source>
</evidence>
<evidence type="ECO:0000269" key="9">
    <source>
    </source>
</evidence>
<evidence type="ECO:0000269" key="10">
    <source>
    </source>
</evidence>
<evidence type="ECO:0000269" key="11">
    <source>
    </source>
</evidence>
<evidence type="ECO:0000269" key="12">
    <source>
    </source>
</evidence>
<evidence type="ECO:0000269" key="13">
    <source>
    </source>
</evidence>
<evidence type="ECO:0000269" key="14">
    <source>
    </source>
</evidence>
<evidence type="ECO:0000269" key="15">
    <source>
    </source>
</evidence>
<evidence type="ECO:0000269" key="16">
    <source>
    </source>
</evidence>
<evidence type="ECO:0000269" key="17">
    <source>
    </source>
</evidence>
<evidence type="ECO:0000269" key="18">
    <source>
    </source>
</evidence>
<evidence type="ECO:0000269" key="19">
    <source>
    </source>
</evidence>
<evidence type="ECO:0000269" key="20">
    <source>
    </source>
</evidence>
<evidence type="ECO:0000269" key="21">
    <source>
    </source>
</evidence>
<evidence type="ECO:0000303" key="22">
    <source>
    </source>
</evidence>
<evidence type="ECO:0000303" key="23">
    <source>
    </source>
</evidence>
<evidence type="ECO:0000303" key="24">
    <source>
    </source>
</evidence>
<evidence type="ECO:0000305" key="25"/>
<evidence type="ECO:0000305" key="26">
    <source>
    </source>
</evidence>
<evidence type="ECO:0000305" key="27">
    <source>
    </source>
</evidence>
<evidence type="ECO:0000305" key="28">
    <source>
    </source>
</evidence>
<evidence type="ECO:0000305" key="29">
    <source>
    </source>
</evidence>
<evidence type="ECO:0000305" key="30">
    <source>
    </source>
</evidence>
<evidence type="ECO:0000312" key="31">
    <source>
        <dbReference type="HGNC" id="HGNC:497"/>
    </source>
</evidence>
<evidence type="ECO:0007744" key="32">
    <source>
        <dbReference type="PDB" id="3J9P"/>
    </source>
</evidence>
<evidence type="ECO:0007744" key="33">
    <source>
        <dbReference type="PDB" id="6PQO"/>
    </source>
</evidence>
<evidence type="ECO:0007744" key="34">
    <source>
        <dbReference type="PDB" id="6PQP"/>
    </source>
</evidence>
<evidence type="ECO:0007744" key="35">
    <source>
        <dbReference type="PDB" id="6PQQ"/>
    </source>
</evidence>
<evidence type="ECO:0007744" key="36">
    <source>
        <dbReference type="PDB" id="6V9V"/>
    </source>
</evidence>
<evidence type="ECO:0007744" key="37">
    <source>
        <dbReference type="PDB" id="6V9W"/>
    </source>
</evidence>
<evidence type="ECO:0007744" key="38">
    <source>
        <dbReference type="PDB" id="6V9X"/>
    </source>
</evidence>
<evidence type="ECO:0007744" key="39">
    <source>
        <dbReference type="PDB" id="6V9Y"/>
    </source>
</evidence>
<evidence type="ECO:0007744" key="40">
    <source>
        <dbReference type="PDB" id="6X2J"/>
    </source>
</evidence>
<evidence type="ECO:0007829" key="41">
    <source>
        <dbReference type="PDB" id="6HC8"/>
    </source>
</evidence>
<evidence type="ECO:0007829" key="42">
    <source>
        <dbReference type="PDB" id="6PQP"/>
    </source>
</evidence>
<evidence type="ECO:0007829" key="43">
    <source>
        <dbReference type="PDB" id="6PQQ"/>
    </source>
</evidence>
<evidence type="ECO:0007829" key="44">
    <source>
        <dbReference type="PDB" id="6V9V"/>
    </source>
</evidence>
<evidence type="ECO:0007829" key="45">
    <source>
        <dbReference type="PDB" id="6V9W"/>
    </source>
</evidence>
<evidence type="ECO:0007829" key="46">
    <source>
        <dbReference type="PDB" id="6V9X"/>
    </source>
</evidence>
<evidence type="ECO:0007829" key="47">
    <source>
        <dbReference type="PDB" id="7OR0"/>
    </source>
</evidence>
<sequence>MKRSLRKMWRPGEKKEPQGVVYEDVPDDTEDFKESLKVVFEGSAYGLQNFNKQKKLKRCDDMDTFFLHYAAAEGQIELMEKITRDSSLEVLHEMDDYGNTPLHCAVEKNQIESVKFLLSRGANPNLRNFNMMAPLHIAVQGMNNEVMKVLLEHRTIDVNLEGENGNTAVIIACTTNNSEALQILLKKGAKPCKSNKWGCFPIHQAAFSGSKECMEIILRFGEEHGYSRQLHINFMNNGKATPLHLAVQNGDLEMIKMCLDNGAQIDPVEKGRCTAIHFAATQGATEIVKLMISSYSGSVDIVNTTDGCHETMLHRASLFDHHELADYLISVGADINKIDSEGRSPLILATASASWNIVNLLLSKGAQVDIKDNFGRNFLHLTVQQPYGLKNLRPEFMQMQQIKELVMDEDNDGCTPLHYACRQGGPGSVNNLLGFNVSIHSKSKDKKSPLHFAASYGRINTCQRLLQDISDTRLLNEGDLHGMTPLHLAAKNGHDKVVQLLLKKGALFLSDHNGWTALHHASMGGYTQTMKVILDTNLKCTDRLDEDGNTALHFAAREGHAKAVALLLSHNADIVLNKQQASFLHLALHNKRKEVVLTIIRSKRWDECLKIFSHNSPGNKCPITEMIEYLPECMKVLLDFCMLHSTEDKSCRDYYIEYNFKYLQCPLEFTKKTPTQDVIYEPLTALNAMVQNNRIELLNHPVCKEYLLMKWLAYGFRAHMMNLGSYCLGLIPMTILVVNIKPGMAFNSTGIINETSDHSEILDTTNSYLIKTCMILVFLSSIFGYCKEAGQIFQQKRNYFMDISNVLEWIIYTTGIIFVLPLFVEIPAHLQWQCGAIAVYFYWMNFLLYLQRFENCGIFIVMLEVILKTLLRSTVVFIFLLLAFGLSFYILLNLQDPFSSPLLSIIQTFSMMLGDINYRESFLEPYLRNELAHPVLSFAQLVSFTIFVPIVLMNLLIGLAVGDIAEVQKHASLKRIAMQVELHTSLEKKLPLWFLRKVDQKSTIVYPNKPRSGGMLFHIFCFLFCTGEIRQEIPNADKSLEMEILKQKYRLKDLTFLLEKQHELIKLIIQKMEIISETEDDDSHCSFQDRFKKEQMEQRNSRWNTVLRAVKAKTHHLEP</sequence>
<keyword id="KW-0002">3D-structure</keyword>
<keyword id="KW-0040">ANK repeat</keyword>
<keyword id="KW-0106">Calcium</keyword>
<keyword id="KW-0107">Calcium channel</keyword>
<keyword id="KW-0109">Calcium transport</keyword>
<keyword id="KW-1003">Cell membrane</keyword>
<keyword id="KW-0175">Coiled coil</keyword>
<keyword id="KW-0225">Disease variant</keyword>
<keyword id="KW-1015">Disulfide bond</keyword>
<keyword id="KW-0325">Glycoprotein</keyword>
<keyword id="KW-0379">Hydroxylation</keyword>
<keyword id="KW-0407">Ion channel</keyword>
<keyword id="KW-0406">Ion transport</keyword>
<keyword id="KW-0472">Membrane</keyword>
<keyword id="KW-0558">Oxidation</keyword>
<keyword id="KW-1267">Proteomics identification</keyword>
<keyword id="KW-1185">Reference proteome</keyword>
<keyword id="KW-0677">Repeat</keyword>
<keyword id="KW-0716">Sensory transduction</keyword>
<keyword id="KW-0812">Transmembrane</keyword>
<keyword id="KW-1133">Transmembrane helix</keyword>
<keyword id="KW-0813">Transport</keyword>
<accession>O75762</accession>
<accession>A6NIN6</accession>
<feature type="chain" id="PRO_0000215369" description="Transient receptor potential cation channel subfamily A member 1">
    <location>
        <begin position="1"/>
        <end position="1119"/>
    </location>
</feature>
<feature type="topological domain" description="Cytoplasmic" evidence="25">
    <location>
        <begin position="1"/>
        <end position="718"/>
    </location>
</feature>
<feature type="transmembrane region" description="Helical; Name=1" evidence="19 33">
    <location>
        <begin position="719"/>
        <end position="739"/>
    </location>
</feature>
<feature type="topological domain" description="Extracellular" evidence="25">
    <location>
        <begin position="740"/>
        <end position="767"/>
    </location>
</feature>
<feature type="transmembrane region" description="Helical; Name=2" evidence="19 33">
    <location>
        <begin position="768"/>
        <end position="793"/>
    </location>
</feature>
<feature type="topological domain" description="Cytoplasmic" evidence="25">
    <location>
        <begin position="794"/>
        <end position="798"/>
    </location>
</feature>
<feature type="transmembrane region" description="Helical; Name=3" evidence="19 33">
    <location>
        <begin position="799"/>
        <end position="823"/>
    </location>
</feature>
<feature type="topological domain" description="Extracellular" evidence="25">
    <location>
        <begin position="824"/>
        <end position="829"/>
    </location>
</feature>
<feature type="transmembrane region" description="Helical; Name=4" evidence="19 33">
    <location>
        <begin position="830"/>
        <end position="850"/>
    </location>
</feature>
<feature type="topological domain" description="Cytoplasmic" evidence="25">
    <location>
        <begin position="851"/>
        <end position="862"/>
    </location>
</feature>
<feature type="transmembrane region" description="Helical; Name=5" evidence="19 33">
    <location>
        <begin position="863"/>
        <end position="892"/>
    </location>
</feature>
<feature type="topological domain" description="Extracellular" evidence="25">
    <location>
        <begin position="893"/>
        <end position="901"/>
    </location>
</feature>
<feature type="intramembrane region" description="Pore-forming" evidence="19 33">
    <location>
        <begin position="902"/>
        <end position="922"/>
    </location>
</feature>
<feature type="topological domain" description="Extracellular" evidence="25">
    <location>
        <begin position="923"/>
        <end position="933"/>
    </location>
</feature>
<feature type="transmembrane region" description="Helical; Name=6" evidence="19 33">
    <location>
        <begin position="934"/>
        <end position="960"/>
    </location>
</feature>
<feature type="topological domain" description="Cytoplasmic" evidence="25">
    <location>
        <begin position="961"/>
        <end position="1119"/>
    </location>
</feature>
<feature type="repeat" description="ANK 1" evidence="3 29">
    <location>
        <begin position="62"/>
        <end position="92"/>
    </location>
</feature>
<feature type="repeat" description="ANK 2" evidence="3 29">
    <location>
        <begin position="97"/>
        <end position="126"/>
    </location>
</feature>
<feature type="repeat" description="ANK 3" evidence="3 29">
    <location>
        <begin position="130"/>
        <end position="160"/>
    </location>
</feature>
<feature type="repeat" description="ANK 4" evidence="3 29">
    <location>
        <begin position="164"/>
        <end position="193"/>
    </location>
</feature>
<feature type="repeat" description="ANK 5" evidence="3 29">
    <location>
        <begin position="197"/>
        <end position="226"/>
    </location>
</feature>
<feature type="repeat" description="ANK 6" evidence="3 29">
    <location>
        <begin position="238"/>
        <end position="267"/>
    </location>
</feature>
<feature type="repeat" description="ANK 7" evidence="3 29">
    <location>
        <begin position="271"/>
        <end position="301"/>
    </location>
</feature>
<feature type="repeat" description="ANK 8" evidence="3 29">
    <location>
        <begin position="308"/>
        <end position="337"/>
    </location>
</feature>
<feature type="repeat" description="ANK 9" evidence="3 29">
    <location>
        <begin position="341"/>
        <end position="370"/>
    </location>
</feature>
<feature type="repeat" description="ANK 10" evidence="29">
    <location>
        <begin position="374"/>
        <end position="403"/>
    </location>
</feature>
<feature type="repeat" description="ANK 11" evidence="3 29">
    <location>
        <begin position="412"/>
        <end position="441"/>
    </location>
</feature>
<feature type="repeat" description="ANK 12" evidence="3 29">
    <location>
        <begin position="445"/>
        <end position="474"/>
    </location>
</feature>
<feature type="repeat" description="ANK 13" evidence="3 29">
    <location>
        <begin position="481"/>
        <end position="510"/>
    </location>
</feature>
<feature type="repeat" description="ANK 14" evidence="3 29">
    <location>
        <begin position="513"/>
        <end position="542"/>
    </location>
</feature>
<feature type="repeat" description="ANK 15" evidence="3 29">
    <location>
        <begin position="547"/>
        <end position="576"/>
    </location>
</feature>
<feature type="repeat" description="ANK 16" evidence="3 29">
    <location>
        <begin position="579"/>
        <end position="609"/>
    </location>
</feature>
<feature type="coiled-coil region" evidence="29">
    <location>
        <begin position="1042"/>
        <end position="1071"/>
    </location>
</feature>
<feature type="binding site" description="covalent" evidence="2">
    <location>
        <position position="414"/>
    </location>
    <ligand>
        <name>(E)-cinnamaldehyde</name>
        <dbReference type="ChEBI" id="CHEBI:16731"/>
        <note>agonist</note>
    </ligand>
</feature>
<feature type="binding site" description="covalent" evidence="2">
    <location>
        <position position="421"/>
    </location>
    <ligand>
        <name>(E)-cinnamaldehyde</name>
        <dbReference type="ChEBI" id="CHEBI:16731"/>
        <note>agonist</note>
    </ligand>
</feature>
<feature type="binding site" description="covalent; Cys highly reactive" evidence="2 26 30">
    <location>
        <position position="621"/>
    </location>
    <ligand>
        <name>(E)-cinnamaldehyde</name>
        <dbReference type="ChEBI" id="CHEBI:16731"/>
        <note>agonist</note>
    </ligand>
</feature>
<feature type="binding site" description="covalent" evidence="26">
    <location>
        <position position="641"/>
    </location>
    <ligand>
        <name>(E)-cinnamaldehyde</name>
        <dbReference type="ChEBI" id="CHEBI:16731"/>
        <note>agonist</note>
    </ligand>
</feature>
<feature type="binding site" description="covalent" evidence="26 30">
    <location>
        <position position="665"/>
    </location>
    <ligand>
        <name>(E)-cinnamaldehyde</name>
        <dbReference type="ChEBI" id="CHEBI:16731"/>
        <note>agonist</note>
    </ligand>
</feature>
<feature type="binding site" description="covalent" evidence="26">
    <location>
        <position position="710"/>
    </location>
    <ligand>
        <name>(E)-cinnamaldehyde</name>
        <dbReference type="ChEBI" id="CHEBI:16731"/>
        <note>agonist</note>
    </ligand>
</feature>
<feature type="binding site" evidence="20 36">
    <location>
        <position position="788"/>
    </location>
    <ligand>
        <name>Ca(2+)</name>
        <dbReference type="ChEBI" id="CHEBI:29108"/>
    </ligand>
</feature>
<feature type="binding site" evidence="20 36">
    <location>
        <position position="791"/>
    </location>
    <ligand>
        <name>Ca(2+)</name>
        <dbReference type="ChEBI" id="CHEBI:29108"/>
    </ligand>
</feature>
<feature type="binding site" evidence="20 36">
    <location>
        <position position="805"/>
    </location>
    <ligand>
        <name>Ca(2+)</name>
        <dbReference type="ChEBI" id="CHEBI:29108"/>
    </ligand>
</feature>
<feature type="binding site" evidence="20 36">
    <location>
        <position position="808"/>
    </location>
    <ligand>
        <name>Ca(2+)</name>
        <dbReference type="ChEBI" id="CHEBI:29108"/>
    </ligand>
</feature>
<feature type="binding site" evidence="29">
    <location>
        <begin position="1046"/>
        <end position="1052"/>
    </location>
    <ligand>
        <name>a 1,2-diacyl-sn-glycero-3-phospho-(1D-myo-inositol)</name>
        <dbReference type="ChEBI" id="CHEBI:57880"/>
    </ligand>
</feature>
<feature type="site" description="Required for C-621 reactivity" evidence="16">
    <location>
        <position position="620"/>
    </location>
</feature>
<feature type="site" description="Essential for electrophile activation. Sensor for electrophilic agents" evidence="19 20">
    <location>
        <position position="621"/>
    </location>
</feature>
<feature type="site" description="Key residue for activation by the scorpion wasabi receptor toxin" evidence="18">
    <location>
        <position position="622"/>
    </location>
</feature>
<feature type="site" description="Important residue for activation by the scorpion wasabi receptor toxin" evidence="18">
    <location>
        <position position="634"/>
    </location>
</feature>
<feature type="site" description="Important residue for activation by the scorpion wasabi receptor toxin" evidence="18">
    <location>
        <position position="646"/>
    </location>
</feature>
<feature type="site" description="Important for electrophile activation" evidence="19 20">
    <location>
        <position position="665"/>
    </location>
</feature>
<feature type="site" description="Crucial for calcium permeation" evidence="1">
    <location>
        <position position="915"/>
    </location>
</feature>
<feature type="modified residue" description="4-hydroxyproline; by EGLN1; transient; in normoxia and hyperoxia" evidence="12">
    <location>
        <position position="394"/>
    </location>
</feature>
<feature type="modified residue" description="Cysteine sulfenic acid (-SOH); transient; in hyperoxia" evidence="27">
    <location>
        <position position="633"/>
    </location>
</feature>
<feature type="modified residue" description="Cysteine sulfenic acid (-SOH); transient; in hyperoxia" evidence="27">
    <location>
        <position position="856"/>
    </location>
</feature>
<feature type="glycosylation site" description="N-linked (GlcNAc...) asparagine" evidence="3">
    <location>
        <position position="747"/>
    </location>
</feature>
<feature type="glycosylation site" description="N-linked (GlcNAc...) asparagine" evidence="3">
    <location>
        <position position="753"/>
    </location>
</feature>
<feature type="disulfide bond" description="Alternate" evidence="2">
    <location>
        <begin position="192"/>
        <end position="665"/>
    </location>
</feature>
<feature type="disulfide bond" description="Alternate" evidence="2">
    <location>
        <begin position="462"/>
        <end position="665"/>
    </location>
</feature>
<feature type="disulfide bond" description="Alternate" evidence="2">
    <location>
        <begin position="608"/>
        <end position="621"/>
    </location>
</feature>
<feature type="disulfide bond" description="Alternate" evidence="2">
    <location>
        <begin position="621"/>
        <end position="665"/>
    </location>
</feature>
<feature type="disulfide bond" description="Alternate; transient; in hyperoxia; unknown whether inter- or intrachain" evidence="27">
    <location>
        <begin position="633"/>
        <end position="856"/>
    </location>
</feature>
<feature type="sequence variant" id="VAR_020660" description="In dbSNP:rs13268757." evidence="4">
    <original>R</original>
    <variation>C</variation>
    <location>
        <position position="3"/>
    </location>
</feature>
<feature type="sequence variant" id="VAR_047471" description="In dbSNP:rs16937976." evidence="4">
    <original>R</original>
    <variation>T</variation>
    <location>
        <position position="58"/>
    </location>
</feature>
<feature type="sequence variant" id="VAR_020661" description="In dbSNP:rs920829.">
    <original>E</original>
    <variation>K</variation>
    <location>
        <position position="179"/>
    </location>
</feature>
<feature type="sequence variant" id="VAR_020662" description="In dbSNP:rs7819749." evidence="4">
    <original>K</original>
    <variation>N</variation>
    <location>
        <position position="186"/>
    </location>
</feature>
<feature type="sequence variant" id="VAR_069737" description="In FEPS1; 5-fold increase in inward current when stimulated by the agonist cinnamaldehyde compared to wild-type at normal neuronal resting potential; consistent with a gain of function mutation; dbSNP:rs398123010." evidence="9">
    <original>N</original>
    <variation>S</variation>
    <location>
        <position position="855"/>
    </location>
</feature>
<feature type="sequence variant" id="VAR_020663" description="In dbSNP:rs959976.">
    <original>H</original>
    <variation>R</variation>
    <location>
        <position position="1018"/>
    </location>
</feature>
<feature type="mutagenesis site" description="Decrease in activation by hyperoxia and diallyl disulfide." evidence="12">
    <original>C</original>
    <variation>S</variation>
    <location>
        <position position="173"/>
    </location>
</feature>
<feature type="mutagenesis site" description="Decrease in activation by hyperoxia and diallyl disulfide." evidence="12">
    <original>C</original>
    <variation>S</variation>
    <location>
        <position position="192"/>
    </location>
</feature>
<feature type="mutagenesis site" description="Loss of answer to hypoxia and hydroxylase inhibitor DMOG, but not to AITC and hyperoxia." evidence="12">
    <original>P</original>
    <variation>A</variation>
    <location>
        <position position="394"/>
    </location>
</feature>
<feature type="mutagenesis site" description="Important decrease in electrophile-evoked response." evidence="16">
    <original>K</original>
    <variation>A</variation>
    <location>
        <position position="620"/>
    </location>
</feature>
<feature type="mutagenesis site" description="Do not exhibit detectable current upon electrophile stimulation. No change in answer to hyperoxia and diallyl disulfide. Do not exhibit detectable currents upon stimulation with agonist JT010." evidence="12 16 17 19 20">
    <original>C</original>
    <variation>A</variation>
    <variation>S</variation>
    <location>
        <position position="621"/>
    </location>
</feature>
<feature type="mutagenesis site" description="Loss of activation by the scorpion wasabi receptor toxin." evidence="18">
    <original>P</original>
    <variation>A</variation>
    <location>
        <position position="622"/>
    </location>
</feature>
<feature type="mutagenesis site" description="Decrease in activation by hyperoxia and diallyl disulfide. Important decrease in activation by hyperoxia and diallyl disulfide; when associated with S-856." evidence="12">
    <original>C</original>
    <variation>S</variation>
    <location>
        <position position="633"/>
    </location>
</feature>
<feature type="mutagenesis site" description="Loss of activation by the scorpion wasabi receptor toxin." evidence="18">
    <original>M</original>
    <variation>L</variation>
    <location>
        <position position="634"/>
    </location>
</feature>
<feature type="mutagenesis site" description="Decrease in electrophile-evoked and hyperoxia response." evidence="12">
    <original>C</original>
    <variation>A</variation>
    <variation>S</variation>
    <location>
        <position position="641"/>
    </location>
</feature>
<feature type="mutagenesis site" description="Does not affect activation by electrophiles." evidence="20">
    <original>C</original>
    <variation>S</variation>
    <location>
        <position position="641"/>
    </location>
</feature>
<feature type="mutagenesis site" description="Loss of activation by the scorpion wasabi receptor toxin." evidence="18">
    <original>T</original>
    <variation>P</variation>
    <location>
        <position position="646"/>
    </location>
</feature>
<feature type="mutagenesis site" description="Decrease in electrophile-evoked and hyperoxia response. Does not affect covalent agonist BITC electrophile-evoked." evidence="12 16 19 20">
    <original>C</original>
    <variation>A</variation>
    <variation>L</variation>
    <variation>S</variation>
    <location>
        <position position="665"/>
    </location>
</feature>
<feature type="mutagenesis site" description="Lacks calcium-mediated potentiation but retains calcium-mediated desensitization. Lacks calcium-mediated potentiation and lacks calcium-mediated desensitization; when associated with S-191 and S-805." evidence="20">
    <original>E</original>
    <variation>S</variation>
    <location>
        <position position="788"/>
    </location>
</feature>
<feature type="mutagenesis site" description="Lacks calcium-mediated potentiation and lacks desensitization; when associated with S-788 and S-805." evidence="20">
    <original>Q</original>
    <variation>S</variation>
    <location>
        <position position="791"/>
    </location>
</feature>
<feature type="mutagenesis site" description="Lacks calcium-mediated potentiation and lacks desensitization; when associated with S-788 and S-791." evidence="20">
    <original>N</original>
    <variation>S</variation>
    <location>
        <position position="805"/>
    </location>
</feature>
<feature type="mutagenesis site" description="Decrease in activation by hyperoxia and diallyl disulfide. Important decrease in activation by hyperoxia and diallyl disulfide; when associated with S-633." evidence="12">
    <original>C</original>
    <variation>S</variation>
    <location>
        <position position="856"/>
    </location>
</feature>
<feature type="mutagenesis site" description="Loss of inhibition by A-967079, AP-18, and ASD. Increase in activation by cinnamaldehyde, AITC and acrolein." evidence="15 17">
    <original>F</original>
    <variation>A</variation>
    <variation>T</variation>
    <location>
        <position position="909"/>
    </location>
</feature>
<feature type="mutagenesis site" description="Abolishes zinc influx. Abolishes activation by extracellular but not by intracellular zinc." evidence="8">
    <original>D</original>
    <variation>A</variation>
    <location>
        <position position="915"/>
    </location>
</feature>
<feature type="mutagenesis site" description="Loss of inhibition by A-967079, AP-18, and ASD. Weak or no change in activation by cinnamaldehyde, AITC and acrolein." evidence="17">
    <original>F</original>
    <variation>A</variation>
    <location>
        <position position="944"/>
    </location>
</feature>
<feature type="helix" evidence="41">
    <location>
        <begin position="325"/>
        <end position="329"/>
    </location>
</feature>
<feature type="helix" evidence="44">
    <location>
        <begin position="448"/>
        <end position="455"/>
    </location>
</feature>
<feature type="helix" evidence="44">
    <location>
        <begin position="459"/>
        <end position="466"/>
    </location>
</feature>
<feature type="turn" evidence="44">
    <location>
        <begin position="473"/>
        <end position="475"/>
    </location>
</feature>
<feature type="helix" evidence="44">
    <location>
        <begin position="485"/>
        <end position="491"/>
    </location>
</feature>
<feature type="helix" evidence="44">
    <location>
        <begin position="495"/>
        <end position="504"/>
    </location>
</feature>
<feature type="helix" evidence="45">
    <location>
        <begin position="512"/>
        <end position="514"/>
    </location>
</feature>
<feature type="helix" evidence="44">
    <location>
        <begin position="517"/>
        <end position="522"/>
    </location>
</feature>
<feature type="turn" evidence="44">
    <location>
        <begin position="523"/>
        <end position="525"/>
    </location>
</feature>
<feature type="helix" evidence="44">
    <location>
        <begin position="527"/>
        <end position="533"/>
    </location>
</feature>
<feature type="strand" evidence="44">
    <location>
        <begin position="538"/>
        <end position="540"/>
    </location>
</feature>
<feature type="helix" evidence="44">
    <location>
        <begin position="551"/>
        <end position="557"/>
    </location>
</feature>
<feature type="helix" evidence="44">
    <location>
        <begin position="561"/>
        <end position="569"/>
    </location>
</feature>
<feature type="strand" evidence="46">
    <location>
        <begin position="578"/>
        <end position="580"/>
    </location>
</feature>
<feature type="helix" evidence="44">
    <location>
        <begin position="583"/>
        <end position="589"/>
    </location>
</feature>
<feature type="helix" evidence="44">
    <location>
        <begin position="593"/>
        <end position="601"/>
    </location>
</feature>
<feature type="strand" evidence="44">
    <location>
        <begin position="602"/>
        <end position="604"/>
    </location>
</feature>
<feature type="helix" evidence="44">
    <location>
        <begin position="605"/>
        <end position="609"/>
    </location>
</feature>
<feature type="strand" evidence="44">
    <location>
        <begin position="617"/>
        <end position="619"/>
    </location>
</feature>
<feature type="helix" evidence="44">
    <location>
        <begin position="622"/>
        <end position="628"/>
    </location>
</feature>
<feature type="helix" evidence="44">
    <location>
        <begin position="631"/>
        <end position="641"/>
    </location>
</feature>
<feature type="strand" evidence="47">
    <location>
        <begin position="642"/>
        <end position="647"/>
    </location>
</feature>
<feature type="strand" evidence="42">
    <location>
        <begin position="650"/>
        <end position="653"/>
    </location>
</feature>
<feature type="strand" evidence="44">
    <location>
        <begin position="656"/>
        <end position="659"/>
    </location>
</feature>
<feature type="strand" evidence="44">
    <location>
        <begin position="661"/>
        <end position="663"/>
    </location>
</feature>
<feature type="turn" evidence="44">
    <location>
        <begin position="668"/>
        <end position="670"/>
    </location>
</feature>
<feature type="helix" evidence="42">
    <location>
        <begin position="673"/>
        <end position="676"/>
    </location>
</feature>
<feature type="helix" evidence="44">
    <location>
        <begin position="684"/>
        <end position="691"/>
    </location>
</feature>
<feature type="helix" evidence="44">
    <location>
        <begin position="695"/>
        <end position="698"/>
    </location>
</feature>
<feature type="helix" evidence="44">
    <location>
        <begin position="701"/>
        <end position="713"/>
    </location>
</feature>
<feature type="helix" evidence="44">
    <location>
        <begin position="715"/>
        <end position="739"/>
    </location>
</feature>
<feature type="strand" evidence="44">
    <location>
        <begin position="742"/>
        <end position="744"/>
    </location>
</feature>
<feature type="strand" evidence="47">
    <location>
        <begin position="745"/>
        <end position="747"/>
    </location>
</feature>
<feature type="strand" evidence="47">
    <location>
        <begin position="750"/>
        <end position="753"/>
    </location>
</feature>
<feature type="strand" evidence="47">
    <location>
        <begin position="761"/>
        <end position="763"/>
    </location>
</feature>
<feature type="helix" evidence="44">
    <location>
        <begin position="767"/>
        <end position="794"/>
    </location>
</feature>
<feature type="strand" evidence="44">
    <location>
        <begin position="795"/>
        <end position="799"/>
    </location>
</feature>
<feature type="helix" evidence="44">
    <location>
        <begin position="804"/>
        <end position="818"/>
    </location>
</feature>
<feature type="helix" evidence="44">
    <location>
        <begin position="820"/>
        <end position="822"/>
    </location>
</feature>
<feature type="helix" evidence="44">
    <location>
        <begin position="828"/>
        <end position="849"/>
    </location>
</feature>
<feature type="strand" evidence="44">
    <location>
        <begin position="851"/>
        <end position="856"/>
    </location>
</feature>
<feature type="helix" evidence="44">
    <location>
        <begin position="857"/>
        <end position="871"/>
    </location>
</feature>
<feature type="helix" evidence="44">
    <location>
        <begin position="874"/>
        <end position="891"/>
    </location>
</feature>
<feature type="turn" evidence="44">
    <location>
        <begin position="892"/>
        <end position="894"/>
    </location>
</feature>
<feature type="strand" evidence="44">
    <location>
        <begin position="898"/>
        <end position="900"/>
    </location>
</feature>
<feature type="helix" evidence="44">
    <location>
        <begin position="901"/>
        <end position="910"/>
    </location>
</feature>
<feature type="helix" evidence="44">
    <location>
        <begin position="911"/>
        <end position="913"/>
    </location>
</feature>
<feature type="turn" evidence="44">
    <location>
        <begin position="919"/>
        <end position="922"/>
    </location>
</feature>
<feature type="helix" evidence="44">
    <location>
        <begin position="923"/>
        <end position="927"/>
    </location>
</feature>
<feature type="helix" evidence="44">
    <location>
        <begin position="934"/>
        <end position="947"/>
    </location>
</feature>
<feature type="turn" evidence="44">
    <location>
        <begin position="948"/>
        <end position="950"/>
    </location>
</feature>
<feature type="helix" evidence="44">
    <location>
        <begin position="951"/>
        <end position="969"/>
    </location>
</feature>
<feature type="helix" evidence="44">
    <location>
        <begin position="971"/>
        <end position="989"/>
    </location>
</feature>
<feature type="helix" evidence="44">
    <location>
        <begin position="992"/>
        <end position="998"/>
    </location>
</feature>
<feature type="strand" evidence="44">
    <location>
        <begin position="1001"/>
        <end position="1005"/>
    </location>
</feature>
<feature type="strand" evidence="43">
    <location>
        <begin position="1007"/>
        <end position="1009"/>
    </location>
</feature>
<feature type="helix" evidence="43">
    <location>
        <begin position="1016"/>
        <end position="1024"/>
    </location>
</feature>
<feature type="helix" evidence="44">
    <location>
        <begin position="1041"/>
        <end position="1070"/>
    </location>
</feature>
<reference key="1">
    <citation type="journal article" date="1999" name="J. Biol. Chem.">
        <title>An ankyrin-like protein with transmembrane domains is specifically lost after oncogenic transformation of human fibroblasts.</title>
        <authorList>
            <person name="Jaquemar D."/>
            <person name="Schenker T."/>
            <person name="Trueb B."/>
        </authorList>
    </citation>
    <scope>NUCLEOTIDE SEQUENCE [MRNA]</scope>
    <scope>DEVELOPMENTAL STAGE</scope>
    <scope>VARIANTS CYS-3; THR-58 AND ASN-186</scope>
    <source>
        <tissue>Lung</tissue>
    </source>
</reference>
<reference key="2">
    <citation type="journal article" date="2006" name="Nature">
        <title>DNA sequence and analysis of human chromosome 8.</title>
        <authorList>
            <person name="Nusbaum C."/>
            <person name="Mikkelsen T.S."/>
            <person name="Zody M.C."/>
            <person name="Asakawa S."/>
            <person name="Taudien S."/>
            <person name="Garber M."/>
            <person name="Kodira C.D."/>
            <person name="Schueler M.G."/>
            <person name="Shimizu A."/>
            <person name="Whittaker C.A."/>
            <person name="Chang J.L."/>
            <person name="Cuomo C.A."/>
            <person name="Dewar K."/>
            <person name="FitzGerald M.G."/>
            <person name="Yang X."/>
            <person name="Allen N.R."/>
            <person name="Anderson S."/>
            <person name="Asakawa T."/>
            <person name="Blechschmidt K."/>
            <person name="Bloom T."/>
            <person name="Borowsky M.L."/>
            <person name="Butler J."/>
            <person name="Cook A."/>
            <person name="Corum B."/>
            <person name="DeArellano K."/>
            <person name="DeCaprio D."/>
            <person name="Dooley K.T."/>
            <person name="Dorris L. III"/>
            <person name="Engels R."/>
            <person name="Gloeckner G."/>
            <person name="Hafez N."/>
            <person name="Hagopian D.S."/>
            <person name="Hall J.L."/>
            <person name="Ishikawa S.K."/>
            <person name="Jaffe D.B."/>
            <person name="Kamat A."/>
            <person name="Kudoh J."/>
            <person name="Lehmann R."/>
            <person name="Lokitsang T."/>
            <person name="Macdonald P."/>
            <person name="Major J.E."/>
            <person name="Matthews C.D."/>
            <person name="Mauceli E."/>
            <person name="Menzel U."/>
            <person name="Mihalev A.H."/>
            <person name="Minoshima S."/>
            <person name="Murayama Y."/>
            <person name="Naylor J.W."/>
            <person name="Nicol R."/>
            <person name="Nguyen C."/>
            <person name="O'Leary S.B."/>
            <person name="O'Neill K."/>
            <person name="Parker S.C.J."/>
            <person name="Polley A."/>
            <person name="Raymond C.K."/>
            <person name="Reichwald K."/>
            <person name="Rodriguez J."/>
            <person name="Sasaki T."/>
            <person name="Schilhabel M."/>
            <person name="Siddiqui R."/>
            <person name="Smith C.L."/>
            <person name="Sneddon T.P."/>
            <person name="Talamas J.A."/>
            <person name="Tenzin P."/>
            <person name="Topham K."/>
            <person name="Venkataraman V."/>
            <person name="Wen G."/>
            <person name="Yamazaki S."/>
            <person name="Young S.K."/>
            <person name="Zeng Q."/>
            <person name="Zimmer A.R."/>
            <person name="Rosenthal A."/>
            <person name="Birren B.W."/>
            <person name="Platzer M."/>
            <person name="Shimizu N."/>
            <person name="Lander E.S."/>
        </authorList>
    </citation>
    <scope>NUCLEOTIDE SEQUENCE [LARGE SCALE GENOMIC DNA]</scope>
</reference>
<reference key="3">
    <citation type="journal article" date="2006" name="Proc. Natl. Acad. Sci. U.S.A.">
        <title>TRP channel activation by reversible covalent modification.</title>
        <authorList>
            <person name="Hinman A."/>
            <person name="Chuang H.H."/>
            <person name="Bautista D.M."/>
            <person name="Julius D."/>
        </authorList>
    </citation>
    <scope>FUNCTION</scope>
    <scope>ACTIVITY REGULATION</scope>
</reference>
<reference key="4">
    <citation type="journal article" date="2007" name="J. Neurosci.">
        <title>Requirement of a soluble intracellular factor for activation of transient receptor potential A1 by pungent chemicals: role of inorganic polyphosphates.</title>
        <authorList>
            <person name="Kim D."/>
            <person name="Cavanaugh E.J."/>
        </authorList>
    </citation>
    <scope>ACTIVITY REGULATION</scope>
</reference>
<reference key="5">
    <citation type="journal article" date="2007" name="Nat. Neurosci.">
        <title>Direct activation of the ion channel TRPA1 by Ca2+.</title>
        <authorList>
            <person name="Zurborg S."/>
            <person name="Yurgionas B."/>
            <person name="Jira J.A."/>
            <person name="Caspani O."/>
            <person name="Heppenstall P.A."/>
        </authorList>
    </citation>
    <scope>FUNCTION</scope>
    <scope>ACTIVITY REGULATION</scope>
</reference>
<reference key="6">
    <citation type="journal article" date="2011" name="Biochim. Biophys. Acta">
        <title>The pore properties of human nociceptor channel TRPA1 evaluated in single channel recordings.</title>
        <authorList>
            <person name="Bobkov Y.V."/>
            <person name="Corey E.A."/>
            <person name="Ache B.W."/>
        </authorList>
    </citation>
    <scope>FUNCTION</scope>
    <scope>TRANSPORTER ACTIVITY</scope>
</reference>
<reference key="7">
    <citation type="journal article" date="2009" name="Nat. Chem. Biol.">
        <title>Zinc activates damage-sensing TRPA1 ion channels.</title>
        <authorList>
            <person name="Hu H."/>
            <person name="Bandell M."/>
            <person name="Petrus M.J."/>
            <person name="Zhu M.X."/>
            <person name="Patapoutian A."/>
        </authorList>
    </citation>
    <scope>FUNCTION</scope>
    <scope>TRANSPORTER ACTIVITY</scope>
    <scope>ACTIVITY REGULATION</scope>
    <scope>MUTAGENESIS OF ASP-915</scope>
</reference>
<reference key="8">
    <citation type="journal article" date="2011" name="Nat. Chem. Biol.">
        <title>TRPA1 underlies a sensing mechanism for O2.</title>
        <authorList>
            <person name="Takahashi N."/>
            <person name="Kuwaki T."/>
            <person name="Kiyonaka S."/>
            <person name="Numata T."/>
            <person name="Kozai D."/>
            <person name="Mizuno Y."/>
            <person name="Yamamoto S."/>
            <person name="Naito S."/>
            <person name="Knevels E."/>
            <person name="Carmeliet P."/>
            <person name="Oga T."/>
            <person name="Kaneko S."/>
            <person name="Suga S."/>
            <person name="Nokami T."/>
            <person name="Yoshida J."/>
            <person name="Mori Y."/>
        </authorList>
    </citation>
    <scope>FUNCTION</scope>
    <scope>ACTIVITY REGULATION</scope>
    <scope>HYDROXYLATION AT PRO-394</scope>
    <scope>OXIDATION AT CYS-633 AND CYS-856</scope>
    <scope>MUTAGENESIS OF CYS-173; CYS-192; PRO-394; CYS-621; CYS-633; CYS-641; CYS-665 AND CYS-856</scope>
    <scope>SUBCELLULAR LOCATION</scope>
</reference>
<reference key="9">
    <citation type="journal article" date="2011" name="Pain">
        <title>Selective blockade of TRPA1 channel attenuates pathological pain without altering noxious cold sensation or body temperature regulation.</title>
        <authorList>
            <person name="Chen J."/>
            <person name="Joshi S.K."/>
            <person name="DiDomenico S."/>
            <person name="Perner R.J."/>
            <person name="Mikusa J.P."/>
            <person name="Gauvin D.M."/>
            <person name="Segreti J.A."/>
            <person name="Han P."/>
            <person name="Zhang X.F."/>
            <person name="Niforatos W."/>
            <person name="Bianchi B.R."/>
            <person name="Baker S.J."/>
            <person name="Zhong C."/>
            <person name="Simler G.H."/>
            <person name="McDonald H.A."/>
            <person name="Schmidt R.G."/>
            <person name="McGaraughty S.P."/>
            <person name="Chu K.L."/>
            <person name="Faltynek C.R."/>
            <person name="Kort M.E."/>
            <person name="Reilly R.M."/>
            <person name="Kym P.R."/>
        </authorList>
    </citation>
    <scope>ACTIVITY REGULATION</scope>
</reference>
<reference key="10">
    <citation type="journal article" date="2012" name="Cough">
        <title>Modulation of cough response by sensory inputs from the nose - role of trigeminal TRPA1 versus TRPM8 channels.</title>
        <authorList>
            <person name="Buday T."/>
            <person name="Brozmanova M."/>
            <person name="Biringerova Z."/>
            <person name="Gavliakova S."/>
            <person name="Poliacek I."/>
            <person name="Calkovsky V."/>
            <person name="Shetthalli M.V."/>
            <person name="Plevkova J."/>
        </authorList>
    </citation>
    <scope>FUNCTION</scope>
</reference>
<reference key="11">
    <citation type="journal article" date="2014" name="Proc. Natl. Acad. Sci. U.S.A.">
        <title>Human TRPA1 is intrinsically cold- and chemosensitive with and without its N-terminal ankyrin repeat domain.</title>
        <authorList>
            <person name="Moparthi L."/>
            <person name="Survery S."/>
            <person name="Kreir M."/>
            <person name="Simonsen C."/>
            <person name="Kjellbom P."/>
            <person name="Hoegestaett E.D."/>
            <person name="Johanson U."/>
            <person name="Zygmunt P.M."/>
        </authorList>
    </citation>
    <scope>FUNCTION</scope>
    <scope>SUBUNIT</scope>
    <scope>SUBCELLULAR LOCATION</scope>
    <scope>ACTIVITY REGULATION</scope>
</reference>
<reference key="12">
    <citation type="journal article" date="2016" name="J. Gen. Physiol.">
        <title>The exceptionally high reactivity of Cys 621 is critical for electrophilic activation of the sensory nerve ion channel TRPA1.</title>
        <authorList>
            <person name="Bahia P.K."/>
            <person name="Parks T.A."/>
            <person name="Stanford K.R."/>
            <person name="Mitchell D.A."/>
            <person name="Varma S."/>
            <person name="Stevens S.M. Jr."/>
            <person name="Taylor-Clark T.E."/>
        </authorList>
    </citation>
    <scope>FUNCTION</scope>
    <scope>ACTIVITY REGULATION</scope>
    <scope>MUTAGENESIS OF LYS-620; CYS-621 AND CYS-665</scope>
</reference>
<reference key="13">
    <citation type="journal article" date="2019" name="Cell">
        <title>A cell-penetrating scorpion toxin enables mode-specific modulation of TRPA1 and pain.</title>
        <authorList>
            <person name="Lin King J.V."/>
            <person name="Emrick J.J."/>
            <person name="Kelly M.J.S."/>
            <person name="Herzig V."/>
            <person name="King G.F."/>
            <person name="Medzihradszky K.F."/>
            <person name="Julius D."/>
        </authorList>
    </citation>
    <scope>MUTAGENESIS OF PRO-622; MET-634 AND THR-646</scope>
    <scope>SUBUNIT</scope>
</reference>
<reference key="14">
    <citation type="journal article" date="2019" name="Eur. J. Med. Chem.">
        <title>N-Cinnamoylanthranilates as human TRPA1 modulators: structure-activity relationships and channel binding sites.</title>
        <authorList>
            <person name="Chandrabalan A."/>
            <person name="McPhillie M.J."/>
            <person name="Morice A.H."/>
            <person name="Boa A.N."/>
            <person name="Sadofsky L.R."/>
        </authorList>
    </citation>
    <scope>FUNCTION</scope>
    <scope>ACTIVITY REGULATION</scope>
    <scope>MUTAGENESIS OF CYS-621; PHE-909 AND PHE-944</scope>
</reference>
<reference evidence="32" key="15">
    <citation type="journal article" date="2015" name="Nature">
        <title>Structure of the TRPA1 ion channel suggests regulatory mechanisms.</title>
        <authorList>
            <person name="Paulsen C.E."/>
            <person name="Armache J.P."/>
            <person name="Gao Y."/>
            <person name="Cheng Y."/>
            <person name="Julius D."/>
        </authorList>
    </citation>
    <scope>STRUCTURE BY ELECTRON MICROSCOPY (4.24 ANGSTROMS) IN COMPLEXES WITH SYNTHETIC AGONISTS</scope>
    <scope>ACTIVITY REGULATION</scope>
    <scope>SUBUNIT</scope>
    <scope>SUBCELLULAR LOCATION</scope>
    <scope>DOMAIN</scope>
    <scope>MUTAGENESIS OF PHE-909</scope>
</reference>
<reference key="16">
    <citation type="journal article" date="2015" name="Nature">
        <authorList>
            <person name="Paulsen C.E."/>
            <person name="Armache J.P."/>
            <person name="Gao Y."/>
            <person name="Cheng Y."/>
            <person name="Julius D."/>
        </authorList>
    </citation>
    <scope>ERRATUM OF PUBMED:25855297</scope>
</reference>
<reference evidence="36 37 38 39" key="17">
    <citation type="journal article" date="2020" name="Nature">
        <title>Irritant-evoked activation and calcium modulation of the TRPA1 receptor.</title>
        <authorList>
            <person name="Zhao J."/>
            <person name="Lin King J.V."/>
            <person name="Paulsen C.E."/>
            <person name="Cheng Y."/>
            <person name="Julius D."/>
        </authorList>
    </citation>
    <scope>STRUCTURE BY ELECTRON MICROSCOPY (2.60 ANGSTROMS) IN COMPLEX WITH CALCIUM AND AGONISTS</scope>
    <scope>FUNCTION</scope>
    <scope>SUBUNIT</scope>
    <scope>MUTAGENESIS OF CYS-621; CYS-641; CYS-665; GLU-788; GLN-791 AND ASN-805</scope>
</reference>
<reference evidence="33 34 35" key="18">
    <citation type="journal article" date="2020" name="Neuron">
        <title>Structural Insights into Electrophile Irritant Sensing by the Human TRPA1 Channel.</title>
        <authorList>
            <person name="Suo Y."/>
            <person name="Wang Z."/>
            <person name="Zubcevic L."/>
            <person name="Hsu A.L."/>
            <person name="He Q."/>
            <person name="Borgnia M.J."/>
            <person name="Ji R.R."/>
            <person name="Lee S.Y."/>
        </authorList>
    </citation>
    <scope>STRUCTURE BY ELECTRON MICROSCOPY (2.81 ANGSTROMS) OF 2-1119 IN COMPLEX WITH AGONIST</scope>
    <scope>FUNCTION</scope>
    <scope>SUBUNIT</scope>
    <scope>MUTAGENESIS OF CYS-621 AND CYS-665</scope>
</reference>
<reference evidence="40" key="19">
    <citation type="journal article" date="2021" name="Neuron">
        <title>A Non-covalent Ligand Reveals Biased Agonism of the TRPA1 Ion Channel.</title>
        <authorList>
            <person name="Liu C."/>
            <person name="Reese R."/>
            <person name="Vu S."/>
            <person name="Rouge L."/>
            <person name="Shields S.D."/>
            <person name="Kakiuchi-Kiyota S."/>
            <person name="Chen H."/>
            <person name="Johnson K."/>
            <person name="Shi Y.P."/>
            <person name="Chernov-Rogan T."/>
            <person name="Greiner D.M.Z."/>
            <person name="Kohli P.B."/>
            <person name="Hackos D."/>
            <person name="Brillantes B."/>
            <person name="Tam C."/>
            <person name="Li T."/>
            <person name="Wang J."/>
            <person name="Safina B."/>
            <person name="Magnuson S."/>
            <person name="Volgraf M."/>
            <person name="Payandeh J."/>
            <person name="Zheng J."/>
            <person name="Rohou A."/>
            <person name="Chen J."/>
        </authorList>
    </citation>
    <scope>STRUCTURE BY ELECTRON MICROSCOPY (3.00 ANGSTROMS) OF 448-1078 IN COMPLEX WITH AGONIST</scope>
    <scope>FUNCTION</scope>
    <scope>TRANSPORTER ACTIVITY</scope>
</reference>
<reference key="20">
    <citation type="journal article" date="2010" name="Neuron">
        <title>A gain-of-function mutation in TRPA1 causes familial episodic pain syndrome.</title>
        <authorList>
            <person name="Kremeyer B."/>
            <person name="Lopera F."/>
            <person name="Cox J.J."/>
            <person name="Momin A."/>
            <person name="Rugiero F."/>
            <person name="Marsh S."/>
            <person name="Woods C.G."/>
            <person name="Jones N.G."/>
            <person name="Paterson K.J."/>
            <person name="Fricker F.R."/>
            <person name="Villegas A."/>
            <person name="Acosta N."/>
            <person name="Pineda-Trujillo N.G."/>
            <person name="Ramirez J.D."/>
            <person name="Zea J."/>
            <person name="Burley M.W."/>
            <person name="Bedoya G."/>
            <person name="Bennett D.L."/>
            <person name="Wood J.N."/>
            <person name="Ruiz-Linares A."/>
        </authorList>
    </citation>
    <scope>VARIANT FEPS1 SER-855</scope>
    <scope>CHARACTERIZATION OF VARIANT FEPS1 SER-855</scope>
    <scope>FUNCTION</scope>
    <scope>SUBCELLULAR LOCATION</scope>
    <scope>ACTIVITY REGULATION</scope>
</reference>
<proteinExistence type="evidence at protein level"/>
<comment type="function">
    <text evidence="2 5 6 8 9 10 12 13 14 16 17 19 20 21">Ligand-activated Ca(2+)-permeable, nonselective cation channel involved in pain detection and possibly also in cold perception, oxygen concentration perception, cough, itch, and inner ear function (PubMed:17259981, PubMed:21195050, PubMed:21873995, PubMed:23199233, PubMed:25389312, PubMed:33152265). Has a relatively high Ca(2+) selectivity, with a preference for divalent over monovalent cations (Ca(2+) &gt; Ba(2+) &gt; Mg(2+) &gt; NH4(+) &gt; Li(+) &gt; K(+)), the influx of cation into the cytoplasm leads to membrane depolarization (PubMed:19202543, PubMed:21195050). Has a central role in the pain response to endogenous inflammatory mediators, such as bradykinin and to a diverse array of irritants. Activated by a large variety of structurally unrelated electrophilic and non-electrophilic chemical compounds, such as allylthiocyanate (AITC) from mustard oil or wasabi, cinnamaldehyde, diallyl disulfide (DADS) from garlic, and acrolein, an environmental irritant (PubMed:20547126, PubMed:25389312, PubMed:27241698, PubMed:30878828). Electrophilic ligands activate TRPA1 by interacting with critical N-terminal Cys residues in a covalent manner (PubMed:17164327, PubMed:27241698, PubMed:31866091, PubMed:32641835). Non-electrophile agonists bind at distinct sites in the transmembrane domain to promote channel activation (PubMed:33152265). Also acts as an ionotropic cannabinoid receptor by being activated by delta(9)-tetrahydrocannabinol (THC), the psychoactive component of marijuana (PubMed:25389312). May be a component for the mechanosensitive transduction channel of hair cells in inner ear, thereby participating in the perception of sounds (By similarity).</text>
</comment>
<comment type="catalytic activity">
    <reaction evidence="10 21">
        <text>Ca(2+)(in) = Ca(2+)(out)</text>
        <dbReference type="Rhea" id="RHEA:29671"/>
        <dbReference type="ChEBI" id="CHEBI:29108"/>
    </reaction>
</comment>
<comment type="catalytic activity">
    <reaction evidence="10 21">
        <text>Mg(2+)(in) = Mg(2+)(out)</text>
        <dbReference type="Rhea" id="RHEA:29827"/>
        <dbReference type="ChEBI" id="CHEBI:18420"/>
    </reaction>
</comment>
<comment type="catalytic activity">
    <reaction evidence="10">
        <text>Na(+)(in) = Na(+)(out)</text>
        <dbReference type="Rhea" id="RHEA:34963"/>
        <dbReference type="ChEBI" id="CHEBI:29101"/>
    </reaction>
</comment>
<comment type="catalytic activity">
    <reaction evidence="10">
        <text>K(+)(in) = K(+)(out)</text>
        <dbReference type="Rhea" id="RHEA:29463"/>
        <dbReference type="ChEBI" id="CHEBI:29103"/>
    </reaction>
</comment>
<comment type="catalytic activity">
    <reaction evidence="8">
        <text>Zn(2+)(in) = Zn(2+)(out)</text>
        <dbReference type="Rhea" id="RHEA:29351"/>
        <dbReference type="ChEBI" id="CHEBI:29105"/>
    </reaction>
</comment>
<comment type="activity regulation">
    <text evidence="1 5 6 7 8 9 11 12 14 15 16 17 18 19 20">Electrophilic ligands activate the channel by covalent modification of intracellular cysteines; Cys-621 plays a key role in covalent binding of electrophiles (PubMed:25389312, PubMed:27241698, PubMed:31866091, PubMed:32641835). Extracellular Ca(2+) both potentiates and inactivates TRPA1; a rapid potentiation follows by slow desensitization (By similarity). Activated by increase in intracellular Ca(2+) concentration (PubMed:17259981). Inhibited by the potent blocker of TRPV channels ruthenium red, A-967079, AP-18, HC-030031, and aryl sulfonamide derivative (S)-N-(4-chlorobenzyl)-1-((4-fluorophenyl)sulfonyl)pyrrolidine-2-carboxamide (ASD) (PubMed:17567811, PubMed:20547126, PubMed:21402443, PubMed:21873995, PubMed:30878828). Activated by benzyl isothiocyanate (BITC), iodoacetamide, sulfhydryl reactive agent MTSEA, N-methyl maleimide (NMM), N-ethylmaleimide (NEM), and 2-aminoethyldiphenylborinate (2-APB) (PubMed:17164327, PubMed:17567811, PubMed:21873995, PubMed:25855297, PubMed:27241698). Also activated by hyperoxia (PubMed:21873995). Acivated by intracellular Zn(2+) (PubMed:19202543). TRPA1 activation may critically depend on the presence of small intracellular compounds such as polyphosphates (PubMed:17567811).</text>
</comment>
<comment type="subunit">
    <text evidence="2 14 15 18 19 20">Homotetramer (PubMed:25389312, PubMed:25855297, PubMed:31866091, PubMed:32641835). Interacts with TMEM100 (By similarity). Interacts with EGLN1 (By similarity). Interacts with the scorpion wasabi receptor toxin at the same site that electrophiles but in a non-covalent manner (PubMed:31447178).</text>
</comment>
<comment type="interaction">
    <interactant intactId="EBI-11722999">
        <id>O75762</id>
    </interactant>
    <interactant intactId="EBI-11722999">
        <id>O75762</id>
        <label>TRPA1</label>
    </interactant>
    <organismsDiffer>false</organismsDiffer>
    <experiments>2</experiments>
</comment>
<comment type="subcellular location">
    <subcellularLocation>
        <location evidence="9 12 14 15">Cell membrane</location>
        <topology evidence="19">Multi-pass membrane protein</topology>
    </subcellularLocation>
</comment>
<comment type="developmental stage">
    <text evidence="4">Expressed in embryos at 12 weeks of age.</text>
</comment>
<comment type="domain">
    <text evidence="29">C-terminal helices from the four subunits associate to form atypical coiled coil structure; this region is probably involved in binding the inositol polyphosphates that are required for optimal channel activity (in vitro).</text>
</comment>
<comment type="domain">
    <text evidence="15">The ANK repeat domain consists of a convex stem structure formed by five ANK repeats and 11 additional ANK repeats that form a crescent-shaped structure that surrounds the protein core.</text>
</comment>
<comment type="PTM">
    <text evidence="20 28">TRPA1 activation by electrophiles occurs though covalent modification of specific cysteine residues in the N-terminal cytoplasmic domain.</text>
</comment>
<comment type="PTM">
    <text evidence="12">Hydroxylation is required for TRPA1 activity inhibition in normoxia. In hypoxia, the decrease in oxygen concentration diminishes the activity of the hydroxylase EGLN1, thus relieving TRPA1 from inhibition and ultimately leading to channel activation.</text>
</comment>
<comment type="PTM">
    <text evidence="12">Oxidation of Cys-633 and Cys-856 in hyperoxia may override the hydroxylase EGLN1-mediated inhibition, causing TRPA1 activation.</text>
</comment>
<comment type="disease" evidence="9">
    <disease id="DI-03683">
        <name>Episodic pain syndrome, familial, 1</name>
        <acronym>FEPS1</acronym>
        <description>An autosomal dominant neurologic disorder characterized by onset in infancy of episodic debilitating upper body pain triggered by fasting, cold, and physical stress. The period of intense pain is accompanied by breathing difficulties, tachycardia, sweating, generalized pallor, peribuccal cyanosis, and stiffness of the abdominal wall. Affected individuals do not manifest altered pain sensitivity outside the episodes.</description>
        <dbReference type="MIM" id="615040"/>
    </disease>
    <text>The disease is caused by variants affecting the gene represented in this entry.</text>
</comment>
<comment type="similarity">
    <text evidence="25">Belongs to the transient receptor (TC 1.A.4) family.</text>
</comment>
<comment type="online information" name="Protein Spotlight">
    <link uri="https://www.proteinspotlight.org/back_issues/082"/>
    <text>The power behind pain - Issue 82 of May 2007</text>
</comment>
<gene>
    <name evidence="31" type="primary">TRPA1</name>
    <name evidence="31" type="synonym">ANKTM1</name>
</gene>
<dbReference type="EMBL" id="Y10601">
    <property type="protein sequence ID" value="CAA71610.1"/>
    <property type="molecule type" value="mRNA"/>
</dbReference>
<dbReference type="EMBL" id="AC022867">
    <property type="status" value="NOT_ANNOTATED_CDS"/>
    <property type="molecule type" value="Genomic_DNA"/>
</dbReference>
<dbReference type="CCDS" id="CCDS34908.1"/>
<dbReference type="RefSeq" id="NP_015628.2">
    <property type="nucleotide sequence ID" value="NM_007332.3"/>
</dbReference>
<dbReference type="RefSeq" id="XP_011515927.1">
    <property type="nucleotide sequence ID" value="XM_011517625.3"/>
</dbReference>
<dbReference type="RefSeq" id="XP_016869435.1">
    <property type="nucleotide sequence ID" value="XM_017013946.1"/>
</dbReference>
<dbReference type="PDB" id="3J9P">
    <property type="method" value="EM"/>
    <property type="resolution" value="4.24 A"/>
    <property type="chains" value="A/B/C/D=2-1119"/>
</dbReference>
<dbReference type="PDB" id="6HC8">
    <property type="method" value="X-ray"/>
    <property type="resolution" value="1.90 A"/>
    <property type="chains" value="E=313-339"/>
</dbReference>
<dbReference type="PDB" id="6PQO">
    <property type="method" value="EM"/>
    <property type="resolution" value="2.88 A"/>
    <property type="chains" value="A/B/C/D=2-1119"/>
</dbReference>
<dbReference type="PDB" id="6PQP">
    <property type="method" value="EM"/>
    <property type="resolution" value="3.06 A"/>
    <property type="chains" value="A/B/C/D=2-1119"/>
</dbReference>
<dbReference type="PDB" id="6PQQ">
    <property type="method" value="EM"/>
    <property type="resolution" value="2.81 A"/>
    <property type="chains" value="A/B/C/D=2-1119"/>
</dbReference>
<dbReference type="PDB" id="6V9V">
    <property type="method" value="EM"/>
    <property type="resolution" value="2.60 A"/>
    <property type="chains" value="A/B/C/D=1-1119"/>
</dbReference>
<dbReference type="PDB" id="6V9W">
    <property type="method" value="EM"/>
    <property type="resolution" value="3.10 A"/>
    <property type="chains" value="A/B/C/D=1-1119"/>
</dbReference>
<dbReference type="PDB" id="6V9X">
    <property type="method" value="EM"/>
    <property type="resolution" value="3.30 A"/>
    <property type="chains" value="A/B/C/D=1-1119"/>
</dbReference>
<dbReference type="PDB" id="6V9Y">
    <property type="method" value="EM"/>
    <property type="resolution" value="3.60 A"/>
    <property type="chains" value="A/B/C/D=1-1119"/>
</dbReference>
<dbReference type="PDB" id="6WJ5">
    <property type="method" value="EM"/>
    <property type="resolution" value="3.60 A"/>
    <property type="chains" value="A/B/C/D=448-1078"/>
</dbReference>
<dbReference type="PDB" id="6X2J">
    <property type="method" value="EM"/>
    <property type="resolution" value="3.00 A"/>
    <property type="chains" value="A/B/C/D=448-1078"/>
</dbReference>
<dbReference type="PDB" id="7JUP">
    <property type="method" value="EM"/>
    <property type="resolution" value="3.05 A"/>
    <property type="chains" value="A/B/C/D=448-1078"/>
</dbReference>
<dbReference type="PDB" id="7OR0">
    <property type="method" value="EM"/>
    <property type="resolution" value="2.64 A"/>
    <property type="chains" value="A/B/C/D=1-1119"/>
</dbReference>
<dbReference type="PDB" id="7OR1">
    <property type="method" value="EM"/>
    <property type="resolution" value="2.64 A"/>
    <property type="chains" value="A/B/C/D=1-1119"/>
</dbReference>
<dbReference type="PDBsum" id="3J9P"/>
<dbReference type="PDBsum" id="6HC8"/>
<dbReference type="PDBsum" id="6PQO"/>
<dbReference type="PDBsum" id="6PQP"/>
<dbReference type="PDBsum" id="6PQQ"/>
<dbReference type="PDBsum" id="6V9V"/>
<dbReference type="PDBsum" id="6V9W"/>
<dbReference type="PDBsum" id="6V9X"/>
<dbReference type="PDBsum" id="6V9Y"/>
<dbReference type="PDBsum" id="6WJ5"/>
<dbReference type="PDBsum" id="6X2J"/>
<dbReference type="PDBsum" id="7JUP"/>
<dbReference type="PDBsum" id="7OR0"/>
<dbReference type="PDBsum" id="7OR1"/>
<dbReference type="EMDB" id="EMD-13036"/>
<dbReference type="EMDB" id="EMD-13037"/>
<dbReference type="EMDB" id="EMD-20449"/>
<dbReference type="EMDB" id="EMD-20450"/>
<dbReference type="EMDB" id="EMD-20451"/>
<dbReference type="EMDB" id="EMD-21127"/>
<dbReference type="EMDB" id="EMD-21128"/>
<dbReference type="EMDB" id="EMD-21129"/>
<dbReference type="EMDB" id="EMD-21130"/>
<dbReference type="EMDB" id="EMD-21131"/>
<dbReference type="EMDB" id="EMD-21688"/>
<dbReference type="EMDB" id="EMD-22009"/>
<dbReference type="EMDB" id="EMD-22490"/>
<dbReference type="EMDB" id="EMD-6267"/>
<dbReference type="EMDB" id="EMD-6268"/>
<dbReference type="EMDB" id="EMD-6269"/>
<dbReference type="SMR" id="O75762"/>
<dbReference type="BioGRID" id="114471">
    <property type="interactions" value="6"/>
</dbReference>
<dbReference type="CORUM" id="O75762"/>
<dbReference type="DIP" id="DIP-61520N"/>
<dbReference type="FunCoup" id="O75762">
    <property type="interactions" value="572"/>
</dbReference>
<dbReference type="IntAct" id="O75762">
    <property type="interactions" value="3"/>
</dbReference>
<dbReference type="MINT" id="O75762"/>
<dbReference type="STRING" id="9606.ENSP00000262209"/>
<dbReference type="BindingDB" id="O75762"/>
<dbReference type="ChEMBL" id="CHEMBL6007"/>
<dbReference type="DrugBank" id="DB11345">
    <property type="generic name" value="(S)-camphor"/>
</dbReference>
<dbReference type="DrugBank" id="DB11148">
    <property type="generic name" value="Butamben"/>
</dbReference>
<dbReference type="DrugBank" id="DB01744">
    <property type="generic name" value="Camphor"/>
</dbReference>
<dbReference type="DrugBank" id="DB09061">
    <property type="generic name" value="Cannabidiol"/>
</dbReference>
<dbReference type="DrugBank" id="DB14050">
    <property type="generic name" value="Cannabidivarin"/>
</dbReference>
<dbReference type="DrugBank" id="DB14184">
    <property type="generic name" value="Cinnamaldehyde"/>
</dbReference>
<dbReference type="DrugBank" id="DB04381">
    <property type="generic name" value="Crotonaldehyde"/>
</dbReference>
<dbReference type="DrugBank" id="DB13716">
    <property type="generic name" value="Dibutylphthalate"/>
</dbReference>
<dbReference type="DrugBank" id="DB03843">
    <property type="generic name" value="Formaldehyde"/>
</dbReference>
<dbReference type="DrugBank" id="DB19255">
    <property type="generic name" value="Gingerol"/>
</dbReference>
<dbReference type="DrugBank" id="DB00825">
    <property type="generic name" value="Levomenthol"/>
</dbReference>
<dbReference type="DrugBank" id="DB14009">
    <property type="generic name" value="Medical Cannabis"/>
</dbReference>
<dbReference type="DrugBank" id="DB12765">
    <property type="generic name" value="Methyl isocyanate"/>
</dbReference>
<dbReference type="DrugBank" id="DB09543">
    <property type="generic name" value="Methyl salicylate"/>
</dbReference>
<dbReference type="DrugBank" id="DB14212">
    <property type="generic name" value="Methylparaben"/>
</dbReference>
<dbReference type="DrugBank" id="DB14011">
    <property type="generic name" value="Nabiximols"/>
</dbReference>
<dbReference type="DrugBank" id="DB03587">
    <property type="generic name" value="Pyruvaldehyde"/>
</dbReference>
<dbReference type="DrugBank" id="DB11755">
    <property type="generic name" value="Tetrahydrocannabivarin"/>
</dbReference>
<dbReference type="DrugCentral" id="O75762"/>
<dbReference type="GuidetoPHARMACOLOGY" id="485"/>
<dbReference type="TCDB" id="1.A.4.6.3">
    <property type="family name" value="the transient receptor potential ca2+/cation channel (trp-cc) family"/>
</dbReference>
<dbReference type="GlyCosmos" id="O75762">
    <property type="glycosylation" value="2 sites, No reported glycans"/>
</dbReference>
<dbReference type="GlyGen" id="O75762">
    <property type="glycosylation" value="3 sites"/>
</dbReference>
<dbReference type="iPTMnet" id="O75762"/>
<dbReference type="PhosphoSitePlus" id="O75762"/>
<dbReference type="BioMuta" id="TRPA1"/>
<dbReference type="jPOST" id="O75762"/>
<dbReference type="MassIVE" id="O75762"/>
<dbReference type="PaxDb" id="9606-ENSP00000262209"/>
<dbReference type="PeptideAtlas" id="O75762"/>
<dbReference type="ProteomicsDB" id="50181"/>
<dbReference type="Antibodypedia" id="12262">
    <property type="antibodies" value="304 antibodies from 32 providers"/>
</dbReference>
<dbReference type="DNASU" id="8989"/>
<dbReference type="Ensembl" id="ENST00000262209.5">
    <property type="protein sequence ID" value="ENSP00000262209.4"/>
    <property type="gene ID" value="ENSG00000104321.11"/>
</dbReference>
<dbReference type="GeneID" id="8989"/>
<dbReference type="KEGG" id="hsa:8989"/>
<dbReference type="MANE-Select" id="ENST00000262209.5">
    <property type="protein sequence ID" value="ENSP00000262209.4"/>
    <property type="RefSeq nucleotide sequence ID" value="NM_007332.3"/>
    <property type="RefSeq protein sequence ID" value="NP_015628.2"/>
</dbReference>
<dbReference type="UCSC" id="uc003xza.4">
    <property type="organism name" value="human"/>
</dbReference>
<dbReference type="AGR" id="HGNC:497"/>
<dbReference type="CTD" id="8989"/>
<dbReference type="DisGeNET" id="8989"/>
<dbReference type="GeneCards" id="TRPA1"/>
<dbReference type="HGNC" id="HGNC:497">
    <property type="gene designation" value="TRPA1"/>
</dbReference>
<dbReference type="HPA" id="ENSG00000104321">
    <property type="expression patterns" value="Tissue enhanced (intestine, stomach, urinary bladder)"/>
</dbReference>
<dbReference type="MalaCards" id="TRPA1"/>
<dbReference type="MIM" id="604775">
    <property type="type" value="gene"/>
</dbReference>
<dbReference type="MIM" id="615040">
    <property type="type" value="phenotype"/>
</dbReference>
<dbReference type="neXtProt" id="NX_O75762"/>
<dbReference type="OpenTargets" id="ENSG00000104321"/>
<dbReference type="Orphanet" id="581271">
    <property type="disease" value="Cramp-fasciculation syndrome"/>
</dbReference>
<dbReference type="Orphanet" id="391389">
    <property type="disease" value="Familial episodic pain syndrome with predominantly upper body involvement"/>
</dbReference>
<dbReference type="VEuPathDB" id="HostDB:ENSG00000104321"/>
<dbReference type="eggNOG" id="KOG0510">
    <property type="taxonomic scope" value="Eukaryota"/>
</dbReference>
<dbReference type="GeneTree" id="ENSGT00940000156118"/>
<dbReference type="InParanoid" id="O75762"/>
<dbReference type="OMA" id="HWATEKN"/>
<dbReference type="OrthoDB" id="1661883at2759"/>
<dbReference type="PAN-GO" id="O75762">
    <property type="GO annotations" value="0 GO annotations based on evolutionary models"/>
</dbReference>
<dbReference type="PhylomeDB" id="O75762"/>
<dbReference type="TreeFam" id="TF317264"/>
<dbReference type="PathwayCommons" id="O75762"/>
<dbReference type="Reactome" id="R-HSA-3295583">
    <property type="pathway name" value="TRP channels"/>
</dbReference>
<dbReference type="SignaLink" id="O75762"/>
<dbReference type="BioGRID-ORCS" id="8989">
    <property type="hits" value="6 hits in 1151 CRISPR screens"/>
</dbReference>
<dbReference type="EvolutionaryTrace" id="O75762"/>
<dbReference type="GenomeRNAi" id="8989"/>
<dbReference type="Pharos" id="O75762">
    <property type="development level" value="Tclin"/>
</dbReference>
<dbReference type="PRO" id="PR:O75762"/>
<dbReference type="Proteomes" id="UP000005640">
    <property type="component" value="Chromosome 8"/>
</dbReference>
<dbReference type="RNAct" id="O75762">
    <property type="molecule type" value="protein"/>
</dbReference>
<dbReference type="Bgee" id="ENSG00000104321">
    <property type="expression patterns" value="Expressed in oocyte and 110 other cell types or tissues"/>
</dbReference>
<dbReference type="ExpressionAtlas" id="O75762">
    <property type="expression patterns" value="baseline and differential"/>
</dbReference>
<dbReference type="GO" id="GO:0016324">
    <property type="term" value="C:apical plasma membrane"/>
    <property type="evidence" value="ECO:0007669"/>
    <property type="project" value="Ensembl"/>
</dbReference>
<dbReference type="GO" id="GO:0030424">
    <property type="term" value="C:axon"/>
    <property type="evidence" value="ECO:0007669"/>
    <property type="project" value="Ensembl"/>
</dbReference>
<dbReference type="GO" id="GO:0005886">
    <property type="term" value="C:plasma membrane"/>
    <property type="evidence" value="ECO:0000315"/>
    <property type="project" value="UniProtKB"/>
</dbReference>
<dbReference type="GO" id="GO:0032421">
    <property type="term" value="C:stereocilium bundle"/>
    <property type="evidence" value="ECO:0007669"/>
    <property type="project" value="Ensembl"/>
</dbReference>
<dbReference type="GO" id="GO:0005262">
    <property type="term" value="F:calcium channel activity"/>
    <property type="evidence" value="ECO:0000304"/>
    <property type="project" value="Reactome"/>
</dbReference>
<dbReference type="GO" id="GO:0015267">
    <property type="term" value="F:channel activity"/>
    <property type="evidence" value="ECO:0000304"/>
    <property type="project" value="ProtInc"/>
</dbReference>
<dbReference type="GO" id="GO:0042802">
    <property type="term" value="F:identical protein binding"/>
    <property type="evidence" value="ECO:0000353"/>
    <property type="project" value="IntAct"/>
</dbReference>
<dbReference type="GO" id="GO:0015278">
    <property type="term" value="F:intracellularly gated calcium channel activity"/>
    <property type="evidence" value="ECO:0000314"/>
    <property type="project" value="UniProtKB"/>
</dbReference>
<dbReference type="GO" id="GO:1990760">
    <property type="term" value="F:osmolarity-sensing monoatomic cation channel activity"/>
    <property type="evidence" value="ECO:0007669"/>
    <property type="project" value="Ensembl"/>
</dbReference>
<dbReference type="GO" id="GO:0097604">
    <property type="term" value="F:temperature-gated cation channel activity"/>
    <property type="evidence" value="ECO:0000314"/>
    <property type="project" value="UniProtKB"/>
</dbReference>
<dbReference type="GO" id="GO:0005245">
    <property type="term" value="F:voltage-gated calcium channel activity"/>
    <property type="evidence" value="ECO:0007669"/>
    <property type="project" value="Ensembl"/>
</dbReference>
<dbReference type="GO" id="GO:0097553">
    <property type="term" value="P:calcium ion transmembrane import into cytosol"/>
    <property type="evidence" value="ECO:0007669"/>
    <property type="project" value="Ensembl"/>
</dbReference>
<dbReference type="GO" id="GO:0070588">
    <property type="term" value="P:calcium ion transmembrane transport"/>
    <property type="evidence" value="ECO:0000315"/>
    <property type="project" value="UniProtKB"/>
</dbReference>
<dbReference type="GO" id="GO:0007166">
    <property type="term" value="P:cell surface receptor signaling pathway"/>
    <property type="evidence" value="ECO:0000250"/>
    <property type="project" value="BHF-UCL"/>
</dbReference>
<dbReference type="GO" id="GO:0071313">
    <property type="term" value="P:cellular response to caffeine"/>
    <property type="evidence" value="ECO:0007669"/>
    <property type="project" value="Ensembl"/>
</dbReference>
<dbReference type="GO" id="GO:0071244">
    <property type="term" value="P:cellular response to carbon dioxide"/>
    <property type="evidence" value="ECO:0007669"/>
    <property type="project" value="Ensembl"/>
</dbReference>
<dbReference type="GO" id="GO:0070417">
    <property type="term" value="P:cellular response to cold"/>
    <property type="evidence" value="ECO:0007669"/>
    <property type="project" value="Ensembl"/>
</dbReference>
<dbReference type="GO" id="GO:0071240">
    <property type="term" value="P:cellular response to food"/>
    <property type="evidence" value="ECO:0000250"/>
    <property type="project" value="BHF-UCL"/>
</dbReference>
<dbReference type="GO" id="GO:0034605">
    <property type="term" value="P:cellular response to heat"/>
    <property type="evidence" value="ECO:0007669"/>
    <property type="project" value="Ensembl"/>
</dbReference>
<dbReference type="GO" id="GO:0070301">
    <property type="term" value="P:cellular response to hydrogen peroxide"/>
    <property type="evidence" value="ECO:0000314"/>
    <property type="project" value="MGI"/>
</dbReference>
<dbReference type="GO" id="GO:0097237">
    <property type="term" value="P:cellular response to toxic substance"/>
    <property type="evidence" value="ECO:0007669"/>
    <property type="project" value="Ensembl"/>
</dbReference>
<dbReference type="GO" id="GO:0050968">
    <property type="term" value="P:detection of chemical stimulus involved in sensory perception of pain"/>
    <property type="evidence" value="ECO:0007669"/>
    <property type="project" value="Ensembl"/>
</dbReference>
<dbReference type="GO" id="GO:0050966">
    <property type="term" value="P:detection of mechanical stimulus involved in sensory perception of pain"/>
    <property type="evidence" value="ECO:0007669"/>
    <property type="project" value="Ensembl"/>
</dbReference>
<dbReference type="GO" id="GO:0006874">
    <property type="term" value="P:intracellular calcium ion homeostasis"/>
    <property type="evidence" value="ECO:0000314"/>
    <property type="project" value="MGI"/>
</dbReference>
<dbReference type="GO" id="GO:0006811">
    <property type="term" value="P:monoatomic ion transport"/>
    <property type="evidence" value="ECO:0000304"/>
    <property type="project" value="ProtInc"/>
</dbReference>
<dbReference type="GO" id="GO:0035774">
    <property type="term" value="P:positive regulation of insulin secretion involved in cellular response to glucose stimulus"/>
    <property type="evidence" value="ECO:0007669"/>
    <property type="project" value="Ensembl"/>
</dbReference>
<dbReference type="GO" id="GO:1903793">
    <property type="term" value="P:positive regulation of monoatomic anion transport"/>
    <property type="evidence" value="ECO:0007669"/>
    <property type="project" value="Ensembl"/>
</dbReference>
<dbReference type="GO" id="GO:0051289">
    <property type="term" value="P:protein homotetramerization"/>
    <property type="evidence" value="ECO:0000314"/>
    <property type="project" value="UniProtKB"/>
</dbReference>
<dbReference type="GO" id="GO:1903522">
    <property type="term" value="P:regulation of blood circulation"/>
    <property type="evidence" value="ECO:0007669"/>
    <property type="project" value="Ensembl"/>
</dbReference>
<dbReference type="GO" id="GO:0098908">
    <property type="term" value="P:regulation of neuronal action potential"/>
    <property type="evidence" value="ECO:0007669"/>
    <property type="project" value="Ensembl"/>
</dbReference>
<dbReference type="GO" id="GO:0009409">
    <property type="term" value="P:response to cold"/>
    <property type="evidence" value="ECO:0000315"/>
    <property type="project" value="UniProtKB"/>
</dbReference>
<dbReference type="GO" id="GO:0048265">
    <property type="term" value="P:response to pain"/>
    <property type="evidence" value="ECO:0007669"/>
    <property type="project" value="Ensembl"/>
</dbReference>
<dbReference type="GO" id="GO:0009410">
    <property type="term" value="P:response to xenobiotic stimulus"/>
    <property type="evidence" value="ECO:0007669"/>
    <property type="project" value="Ensembl"/>
</dbReference>
<dbReference type="GO" id="GO:0019233">
    <property type="term" value="P:sensory perception of pain"/>
    <property type="evidence" value="ECO:0000315"/>
    <property type="project" value="UniProtKB"/>
</dbReference>
<dbReference type="GO" id="GO:0050955">
    <property type="term" value="P:thermoception"/>
    <property type="evidence" value="ECO:0007669"/>
    <property type="project" value="Ensembl"/>
</dbReference>
<dbReference type="GO" id="GO:0014832">
    <property type="term" value="P:urinary bladder smooth muscle contraction"/>
    <property type="evidence" value="ECO:0007669"/>
    <property type="project" value="Ensembl"/>
</dbReference>
<dbReference type="FunFam" id="1.25.40.20:FF:000186">
    <property type="entry name" value="Transient receptor potential cation channel A1, isoform K"/>
    <property type="match status" value="1"/>
</dbReference>
<dbReference type="FunFam" id="1.25.40.20:FF:000272">
    <property type="entry name" value="Transient receptor potential cation channel subfamily A member 1"/>
    <property type="match status" value="1"/>
</dbReference>
<dbReference type="FunFam" id="1.25.40.20:FF:000866">
    <property type="entry name" value="Transient receptor potential cation channel subfamily A member 1"/>
    <property type="match status" value="1"/>
</dbReference>
<dbReference type="Gene3D" id="1.25.40.20">
    <property type="entry name" value="Ankyrin repeat-containing domain"/>
    <property type="match status" value="5"/>
</dbReference>
<dbReference type="InterPro" id="IPR002110">
    <property type="entry name" value="Ankyrin_rpt"/>
</dbReference>
<dbReference type="InterPro" id="IPR036770">
    <property type="entry name" value="Ankyrin_rpt-contain_sf"/>
</dbReference>
<dbReference type="InterPro" id="IPR005821">
    <property type="entry name" value="Ion_trans_dom"/>
</dbReference>
<dbReference type="InterPro" id="IPR052076">
    <property type="entry name" value="TRP_cation_channel"/>
</dbReference>
<dbReference type="PANTHER" id="PTHR47143:SF1">
    <property type="entry name" value="ION_TRANS DOMAIN-CONTAINING PROTEIN"/>
    <property type="match status" value="1"/>
</dbReference>
<dbReference type="PANTHER" id="PTHR47143">
    <property type="entry name" value="TRANSIENT RECEPTOR POTENTIAL CATION CHANNEL PROTEIN PAINLESS"/>
    <property type="match status" value="1"/>
</dbReference>
<dbReference type="Pfam" id="PF00023">
    <property type="entry name" value="Ank"/>
    <property type="match status" value="2"/>
</dbReference>
<dbReference type="Pfam" id="PF12796">
    <property type="entry name" value="Ank_2"/>
    <property type="match status" value="5"/>
</dbReference>
<dbReference type="Pfam" id="PF00520">
    <property type="entry name" value="Ion_trans"/>
    <property type="match status" value="1"/>
</dbReference>
<dbReference type="PRINTS" id="PR01415">
    <property type="entry name" value="ANKYRIN"/>
</dbReference>
<dbReference type="SMART" id="SM00248">
    <property type="entry name" value="ANK"/>
    <property type="match status" value="14"/>
</dbReference>
<dbReference type="SUPFAM" id="SSF48403">
    <property type="entry name" value="Ankyrin repeat"/>
    <property type="match status" value="2"/>
</dbReference>
<dbReference type="PROSITE" id="PS50297">
    <property type="entry name" value="ANK_REP_REGION"/>
    <property type="match status" value="1"/>
</dbReference>
<dbReference type="PROSITE" id="PS50088">
    <property type="entry name" value="ANK_REPEAT"/>
    <property type="match status" value="9"/>
</dbReference>